<evidence type="ECO:0000255" key="1">
    <source>
        <dbReference type="HAMAP-Rule" id="MF_04079"/>
    </source>
</evidence>
<evidence type="ECO:0000256" key="2">
    <source>
        <dbReference type="SAM" id="MobiDB-lite"/>
    </source>
</evidence>
<evidence type="ECO:0000305" key="3"/>
<protein>
    <recommendedName>
        <fullName evidence="1">Protein Tat</fullName>
    </recommendedName>
    <alternativeName>
        <fullName evidence="1">Transactivating regulatory protein</fullName>
    </alternativeName>
</protein>
<name>TAT_HV1B9</name>
<organismHost>
    <name type="scientific">Homo sapiens</name>
    <name type="common">Human</name>
    <dbReference type="NCBI Taxonomy" id="9606"/>
</organismHost>
<accession>Q73370</accession>
<sequence length="100" mass="11404">MEPVNPSLEPWKHPGSQPKTACTNCYCKKCCFHCQACFITKGLGISYGRKKRRQRRRPPQDSQTHQVSLSKPSSQPRGDPTGPKEQKKKVERETETDPVH</sequence>
<reference key="1">
    <citation type="journal article" date="1992" name="J. Virol.">
        <title>An infectious molecular clone of an unusual macrophage-tropic and highly cytopathic strain of human immunodeficiency virus type 1.</title>
        <authorList>
            <person name="Collman R."/>
            <person name="Balliet J.W."/>
            <person name="Gregory S.A."/>
            <person name="Friedman H."/>
            <person name="Kolson D.L."/>
            <person name="Nathanson N."/>
            <person name="Srinivasan A."/>
        </authorList>
    </citation>
    <scope>NUCLEOTIDE SEQUENCE [GENOMIC DNA]</scope>
</reference>
<reference key="2">
    <citation type="journal article" date="2005" name="Microbes Infect.">
        <title>Decoding Tat: the biology of HIV Tat posttranslational modifications.</title>
        <authorList>
            <person name="Hetzer C."/>
            <person name="Dormeyer W."/>
            <person name="Schnolzer M."/>
            <person name="Ott M."/>
        </authorList>
    </citation>
    <scope>REVIEW</scope>
    <scope>ALTERNATIVE SPLICING</scope>
</reference>
<reference key="3">
    <citation type="journal article" date="2006" name="Front. Biosci.">
        <title>The multiple functions of HIV-1 Tat: proliferation versus apoptosis.</title>
        <authorList>
            <person name="Peruzzi F."/>
        </authorList>
    </citation>
    <scope>REVIEW</scope>
</reference>
<reference key="4">
    <citation type="journal article" date="2006" name="Microbes Infect.">
        <title>HIV tat and neurotoxicity.</title>
        <authorList>
            <person name="King J.E."/>
            <person name="Eugenin E.A."/>
            <person name="Buckner C.M."/>
            <person name="Berman J.W."/>
        </authorList>
    </citation>
    <scope>REVIEW</scope>
</reference>
<proteinExistence type="inferred from homology"/>
<keyword id="KW-0007">Acetylation</keyword>
<keyword id="KW-0010">Activator</keyword>
<keyword id="KW-0014">AIDS</keyword>
<keyword id="KW-0025">Alternative splicing</keyword>
<keyword id="KW-0053">Apoptosis</keyword>
<keyword id="KW-1035">Host cytoplasm</keyword>
<keyword id="KW-1048">Host nucleus</keyword>
<keyword id="KW-0945">Host-virus interaction</keyword>
<keyword id="KW-1090">Inhibition of host innate immune response by virus</keyword>
<keyword id="KW-1114">Inhibition of host interferon signaling pathway by virus</keyword>
<keyword id="KW-0922">Interferon antiviral system evasion</keyword>
<keyword id="KW-1017">Isopeptide bond</keyword>
<keyword id="KW-0479">Metal-binding</keyword>
<keyword id="KW-0488">Methylation</keyword>
<keyword id="KW-1122">Modulation of host chromatin by virus</keyword>
<keyword id="KW-1126">Modulation of host PP1 activity by virus</keyword>
<keyword id="KW-0597">Phosphoprotein</keyword>
<keyword id="KW-1185">Reference proteome</keyword>
<keyword id="KW-0694">RNA-binding</keyword>
<keyword id="KW-0964">Secreted</keyword>
<keyword id="KW-0804">Transcription</keyword>
<keyword id="KW-0805">Transcription regulation</keyword>
<keyword id="KW-0832">Ubl conjugation</keyword>
<keyword id="KW-0899">Viral immunoevasion</keyword>
<keyword id="KW-0862">Zinc</keyword>
<dbReference type="EMBL" id="U39362">
    <property type="protein sequence ID" value="AAA81040.1"/>
    <property type="molecule type" value="Genomic_DNA"/>
</dbReference>
<dbReference type="SMR" id="Q73370"/>
<dbReference type="Proteomes" id="UP000007691">
    <property type="component" value="Genome"/>
</dbReference>
<dbReference type="GO" id="GO:0005576">
    <property type="term" value="C:extracellular region"/>
    <property type="evidence" value="ECO:0007669"/>
    <property type="project" value="UniProtKB-SubCell"/>
</dbReference>
<dbReference type="GO" id="GO:0030430">
    <property type="term" value="C:host cell cytoplasm"/>
    <property type="evidence" value="ECO:0007669"/>
    <property type="project" value="UniProtKB-SubCell"/>
</dbReference>
<dbReference type="GO" id="GO:0044196">
    <property type="term" value="C:host cell nucleolus"/>
    <property type="evidence" value="ECO:0007669"/>
    <property type="project" value="UniProtKB-SubCell"/>
</dbReference>
<dbReference type="GO" id="GO:0042805">
    <property type="term" value="F:actinin binding"/>
    <property type="evidence" value="ECO:0007669"/>
    <property type="project" value="UniProtKB-UniRule"/>
</dbReference>
<dbReference type="GO" id="GO:0030332">
    <property type="term" value="F:cyclin binding"/>
    <property type="evidence" value="ECO:0007669"/>
    <property type="project" value="UniProtKB-UniRule"/>
</dbReference>
<dbReference type="GO" id="GO:0046872">
    <property type="term" value="F:metal ion binding"/>
    <property type="evidence" value="ECO:0007669"/>
    <property type="project" value="UniProtKB-UniRule"/>
</dbReference>
<dbReference type="GO" id="GO:0019904">
    <property type="term" value="F:protein domain specific binding"/>
    <property type="evidence" value="ECO:0007669"/>
    <property type="project" value="UniProtKB-UniRule"/>
</dbReference>
<dbReference type="GO" id="GO:0004865">
    <property type="term" value="F:protein serine/threonine phosphatase inhibitor activity"/>
    <property type="evidence" value="ECO:0007669"/>
    <property type="project" value="UniProtKB-KW"/>
</dbReference>
<dbReference type="GO" id="GO:0001070">
    <property type="term" value="F:RNA-binding transcription regulator activity"/>
    <property type="evidence" value="ECO:0007669"/>
    <property type="project" value="UniProtKB-UniRule"/>
</dbReference>
<dbReference type="GO" id="GO:1990970">
    <property type="term" value="F:trans-activation response element binding"/>
    <property type="evidence" value="ECO:0007669"/>
    <property type="project" value="UniProtKB-UniRule"/>
</dbReference>
<dbReference type="GO" id="GO:0006351">
    <property type="term" value="P:DNA-templated transcription"/>
    <property type="evidence" value="ECO:0007669"/>
    <property type="project" value="UniProtKB-UniRule"/>
</dbReference>
<dbReference type="GO" id="GO:0032968">
    <property type="term" value="P:positive regulation of transcription elongation by RNA polymerase II"/>
    <property type="evidence" value="ECO:0007669"/>
    <property type="project" value="UniProtKB-UniRule"/>
</dbReference>
<dbReference type="GO" id="GO:0050434">
    <property type="term" value="P:positive regulation of viral transcription"/>
    <property type="evidence" value="ECO:0007669"/>
    <property type="project" value="UniProtKB-UniRule"/>
</dbReference>
<dbReference type="GO" id="GO:0039525">
    <property type="term" value="P:symbiont-mediated perturbation of host chromatin organization"/>
    <property type="evidence" value="ECO:0007669"/>
    <property type="project" value="UniProtKB-UniRule"/>
</dbReference>
<dbReference type="GO" id="GO:0052170">
    <property type="term" value="P:symbiont-mediated suppression of host innate immune response"/>
    <property type="evidence" value="ECO:0007669"/>
    <property type="project" value="UniProtKB-KW"/>
</dbReference>
<dbReference type="GO" id="GO:0039606">
    <property type="term" value="P:symbiont-mediated suppression of host translation initiation"/>
    <property type="evidence" value="ECO:0007669"/>
    <property type="project" value="UniProtKB-KW"/>
</dbReference>
<dbReference type="GO" id="GO:0039502">
    <property type="term" value="P:symbiont-mediated suppression of host type I interferon-mediated signaling pathway"/>
    <property type="evidence" value="ECO:0007669"/>
    <property type="project" value="UniProtKB-UniRule"/>
</dbReference>
<dbReference type="Gene3D" id="4.10.20.10">
    <property type="entry name" value="Tat domain"/>
    <property type="match status" value="1"/>
</dbReference>
<dbReference type="HAMAP" id="MF_04079">
    <property type="entry name" value="HIV_TAT"/>
    <property type="match status" value="1"/>
</dbReference>
<dbReference type="InterPro" id="IPR001831">
    <property type="entry name" value="IV_Tat"/>
</dbReference>
<dbReference type="InterPro" id="IPR036963">
    <property type="entry name" value="Tat_dom_sf"/>
</dbReference>
<dbReference type="Pfam" id="PF00539">
    <property type="entry name" value="Tat"/>
    <property type="match status" value="1"/>
</dbReference>
<dbReference type="PRINTS" id="PR00055">
    <property type="entry name" value="HIVTATDOMAIN"/>
</dbReference>
<gene>
    <name evidence="1" type="primary">tat</name>
</gene>
<feature type="chain" id="PRO_0000250987" description="Protein Tat">
    <location>
        <begin position="1"/>
        <end position="100"/>
    </location>
</feature>
<feature type="region of interest" description="Transactivation" evidence="1">
    <location>
        <begin position="1"/>
        <end position="48"/>
    </location>
</feature>
<feature type="region of interest" description="Interaction with human CREBBP" evidence="1">
    <location>
        <begin position="1"/>
        <end position="24"/>
    </location>
</feature>
<feature type="region of interest" description="Disordered" evidence="2">
    <location>
        <begin position="1"/>
        <end position="20"/>
    </location>
</feature>
<feature type="region of interest" description="Cysteine-rich" evidence="1">
    <location>
        <begin position="22"/>
        <end position="37"/>
    </location>
</feature>
<feature type="region of interest" description="Core" evidence="1">
    <location>
        <begin position="38"/>
        <end position="48"/>
    </location>
</feature>
<feature type="region of interest" description="Disordered" evidence="2">
    <location>
        <begin position="47"/>
        <end position="100"/>
    </location>
</feature>
<feature type="region of interest" description="Interaction with the host capping enzyme RNGTT" evidence="1">
    <location>
        <begin position="49"/>
        <end position="85"/>
    </location>
</feature>
<feature type="short sequence motif" description="Nuclear localization signal, RNA-binding (TAR), and protein transduction" evidence="1">
    <location>
        <begin position="49"/>
        <end position="57"/>
    </location>
</feature>
<feature type="short sequence motif" description="Cell attachment site" evidence="1">
    <location>
        <begin position="77"/>
        <end position="79"/>
    </location>
</feature>
<feature type="compositionally biased region" description="Basic residues" evidence="2">
    <location>
        <begin position="48"/>
        <end position="57"/>
    </location>
</feature>
<feature type="compositionally biased region" description="Polar residues" evidence="2">
    <location>
        <begin position="61"/>
        <end position="76"/>
    </location>
</feature>
<feature type="compositionally biased region" description="Basic and acidic residues" evidence="2">
    <location>
        <begin position="82"/>
        <end position="100"/>
    </location>
</feature>
<feature type="binding site" evidence="1">
    <location>
        <position position="22"/>
    </location>
    <ligand>
        <name>Zn(2+)</name>
        <dbReference type="ChEBI" id="CHEBI:29105"/>
        <label>1</label>
    </ligand>
</feature>
<feature type="binding site" evidence="1">
    <location>
        <position position="25"/>
    </location>
    <ligand>
        <name>Zn(2+)</name>
        <dbReference type="ChEBI" id="CHEBI:29105"/>
        <label>2</label>
    </ligand>
</feature>
<feature type="binding site" evidence="1">
    <location>
        <position position="27"/>
    </location>
    <ligand>
        <name>Zn(2+)</name>
        <dbReference type="ChEBI" id="CHEBI:29105"/>
        <label>2</label>
    </ligand>
</feature>
<feature type="binding site" evidence="1">
    <location>
        <position position="30"/>
    </location>
    <ligand>
        <name>Zn(2+)</name>
        <dbReference type="ChEBI" id="CHEBI:29105"/>
        <label>2</label>
    </ligand>
</feature>
<feature type="binding site" evidence="1">
    <location>
        <position position="33"/>
    </location>
    <ligand>
        <name>Zn(2+)</name>
        <dbReference type="ChEBI" id="CHEBI:29105"/>
        <label>1</label>
    </ligand>
</feature>
<feature type="binding site" evidence="1">
    <location>
        <position position="34"/>
    </location>
    <ligand>
        <name>Zn(2+)</name>
        <dbReference type="ChEBI" id="CHEBI:29105"/>
        <label>1</label>
    </ligand>
</feature>
<feature type="binding site" evidence="1">
    <location>
        <position position="37"/>
    </location>
    <ligand>
        <name>Zn(2+)</name>
        <dbReference type="ChEBI" id="CHEBI:29105"/>
        <label>1</label>
    </ligand>
</feature>
<feature type="site" description="Essential for Tat translocation through the endosomal membrane" evidence="1">
    <location>
        <position position="11"/>
    </location>
</feature>
<feature type="modified residue" description="N6-acetyllysine; by host PCAF" evidence="1">
    <location>
        <position position="28"/>
    </location>
</feature>
<feature type="modified residue" description="N6-acetyllysine; by host EP300 and GCN5L2" evidence="1">
    <location>
        <position position="50"/>
    </location>
</feature>
<feature type="modified residue" description="N6-acetyllysine; by host EP300 and GCN5L2" evidence="1">
    <location>
        <position position="51"/>
    </location>
</feature>
<feature type="modified residue" description="Asymmetric dimethylarginine; by host PRMT6" evidence="1">
    <location>
        <position position="52"/>
    </location>
</feature>
<feature type="modified residue" description="Asymmetric dimethylarginine; by host PRMT6" evidence="1">
    <location>
        <position position="53"/>
    </location>
</feature>
<feature type="cross-link" description="Glycyl lysine isopeptide (Lys-Gly) (interchain with G-Cter in ubiquitin)" evidence="1">
    <location>
        <position position="71"/>
    </location>
</feature>
<feature type="splice variant" id="VSP_022407" description="In isoform Short.">
    <location>
        <begin position="72"/>
        <end position="100"/>
    </location>
</feature>
<organism>
    <name type="scientific">Human immunodeficiency virus type 1 group M subtype B (strain 89.6)</name>
    <name type="common">HIV-1</name>
    <dbReference type="NCBI Taxonomy" id="401671"/>
    <lineage>
        <taxon>Viruses</taxon>
        <taxon>Riboviria</taxon>
        <taxon>Pararnavirae</taxon>
        <taxon>Artverviricota</taxon>
        <taxon>Revtraviricetes</taxon>
        <taxon>Ortervirales</taxon>
        <taxon>Retroviridae</taxon>
        <taxon>Orthoretrovirinae</taxon>
        <taxon>Lentivirus</taxon>
        <taxon>Human immunodeficiency virus type 1</taxon>
    </lineage>
</organism>
<comment type="function">
    <text evidence="1">Transcriptional activator that increases RNA Pol II processivity, thereby increasing the level of full-length viral transcripts. Recognizes a hairpin structure at the 5'-LTR of the nascent viral mRNAs referred to as the transactivation responsive RNA element (TAR) and recruits the cyclin T1-CDK9 complex (P-TEFb complex) that will in turn hyperphosphorylate the RNA polymerase II to allow efficient elongation. The CDK9 component of P-TEFb and other Tat-activated kinases hyperphosphorylate the C-terminus of RNA Pol II that becomes stabilized and much more processive. Other factors such as HTATSF1/Tat-SF1, SUPT5H/SPT5, and HTATIP2 are also important for Tat's function. Besides its effect on RNA Pol II processivity, Tat induces chromatin remodeling of proviral genes by recruiting the histone acetyltransferases (HATs) CREBBP, EP300 and PCAF to the chromatin. This also contributes to the increase in proviral transcription rate, especially when the provirus integrates in transcriptionally silent region of the host genome. To ensure maximal activation of the LTR, Tat mediates nuclear translocation of NF-kappa-B by interacting with host RELA. Through its interaction with host TBP, Tat may also modulate transcription initiation. Tat can reactivate a latently infected cell by penetrating in it and transactivating its LTR promoter. In the cytoplasm, Tat is thought to act as a translational activator of HIV-1 mRNAs.</text>
</comment>
<comment type="function">
    <text evidence="1">Extracellular circulating Tat can be endocytosed by surrounding uninfected cells via the binding to several surface receptors such as CD26, CXCR4, heparan sulfate proteoglycans (HSPG) or LDLR. Neurons are rarely infected, but they internalize Tat via their LDLR. Through its interaction with nuclear HATs, Tat is potentially able to control the acetylation-dependent cellular gene expression. Modulates the expression of many cellular genes involved in cell survival, proliferation or in coding for cytokines or cytokine receptors. Tat plays a role in T-cell and neurons apoptosis. Tat induced neurotoxicity and apoptosis probably contribute to neuroAIDS. Circulating Tat also acts as a chemokine-like and/or growth factor-like molecule that binds to specific receptors on the surface of the cells, affecting many cellular pathways. In the vascular system, Tat binds to ITGAV/ITGB3 and ITGA5/ITGB1 integrins dimers at the surface of endothelial cells and competes with bFGF for heparin-binding sites, leading to an excess of soluble bFGF.</text>
</comment>
<comment type="subunit">
    <text evidence="1">Interacts with host CCNT1. Associates with the P-TEFb complex composed at least of Tat, P-TEFb (CDK9 and CCNT1), TAR RNA, RNA Pol II. Recruits the HATs CREBBP, TAF1/TFIID, EP300, PCAF and GCN5L2. Interacts with host KAT5/Tip60; this interaction targets the latter to degradation. Interacts with the host deacetylase SIRT1. Interacts with host capping enzyme RNGTT; this interaction stimulates RNGTT. Binds to host KDR, and to the host integrins ITGAV/ITGB3 and ITGA5/ITGB1. Interacts with host KPNB1/importin beta-1 without previous binding to KPNA1/importin alpha-1. Interacts with EIF2AK2. Interacts with host nucleosome assembly protein NAP1L1; this interaction may be required for the transport of Tat within the nucleus, since the two proteins interact at the nuclear rim. Interacts with host C1QBP/SF2P32; this interaction involves lysine-acetylated Tat. Interacts with the host chemokine receptors CCR2, CCR3 and CXCR4. Interacts with host DPP4/CD26; this interaction may trigger an anti-proliferative effect. Interacts with host LDLR. Interacts with the host extracellular matrix metalloproteinase MMP1. Interacts with host PRMT6; this interaction mediates Tat's methylation. Interacts with, and is ubiquitinated by MDM2/Hdm2. Interacts with host PSMC3 and HTATIP2. Interacts with STAB1; this interaction may overcome SATB1-mediated repression of IL2 and IL2RA (interleukin) in T cells by binding to the same domain than HDAC1. Interacts (when acetylated) with human CDK13, thereby increasing HIV-1 mRNA splicing and promoting the production of the doubly spliced HIV-1 protein Nef. Interacts with host TBP; this interaction modulates the activity of transcriptional pre-initiation complex. Interacts with host RELA. Interacts with host PLSCR1; this interaction negatively regulates Tat transactivation activity by altering its subcellular distribution.</text>
</comment>
<comment type="subcellular location">
    <subcellularLocation>
        <location evidence="1">Host nucleus</location>
        <location evidence="1">Host nucleolus</location>
    </subcellularLocation>
    <subcellularLocation>
        <location evidence="1">Host cytoplasm</location>
    </subcellularLocation>
    <subcellularLocation>
        <location evidence="1">Secreted</location>
    </subcellularLocation>
    <text evidence="1">Probably localizes to both nuclear and nucleolar compartments. Nuclear localization is mediated through the interaction of the nuclear localization signal with importin KPNB1. Secretion occurs through a Golgi-independent pathway. Tat is released from infected cells to the extracellular space where it remains associated to the cell membrane, or is secreted into the cerebrospinal fluid and sera. Extracellular Tat can be endocytosed by surrounding uninfected cells via binding to several receptors depending on the cell type.</text>
</comment>
<comment type="alternative products">
    <event type="alternative splicing"/>
    <isoform>
        <id>Q73370-1</id>
        <name>Long</name>
        <sequence type="displayed"/>
    </isoform>
    <isoform>
        <id>Q73370-2</id>
        <name>Short</name>
        <sequence type="described" ref="VSP_022407"/>
    </isoform>
</comment>
<comment type="domain">
    <text evidence="1">The cell attachment site mediates the interaction with ITGAV/ITGB3 and ITGA5/ITGB1 integrins, leading to vascular cell migration and invasion. This interaction also provides endothelial cells with the adhesion signal they require to grow in response to mitogens.</text>
</comment>
<comment type="domain">
    <text evidence="1">The Cys-rich region may bind 2 zinc ions. This region is involved in binding to KAT5.</text>
</comment>
<comment type="domain">
    <text evidence="1">The transactivation domain mediates the interaction with CCNT1, GCN5L2, and MDM2.</text>
</comment>
<comment type="domain">
    <text evidence="1">The Arg-rich RNA-binding region binds the TAR RNA. This region also mediates the nuclear localization through direct binding to KPNB1 and is involved in Tat's transfer across cell membranes (protein transduction). The same region is required for the interaction with EP300, PCAF, EIF2AK2 and KDR.</text>
</comment>
<comment type="PTM">
    <text evidence="1">Asymmetrical arginine methylation by host PRMT6 seems to diminish the transactivation capacity of Tat and affects the interaction with host CCNT1.</text>
</comment>
<comment type="PTM">
    <text evidence="1">Acetylation by EP300, CREBBP, GCN5L2/GCN5 and PCAF regulates the transactivation activity of Tat. EP300-mediated acetylation of Lys-50 promotes dissociation of Tat from the TAR RNA through the competitive binding to PCAF's bromodomain. In addition, the non-acetylated Tat's N-terminus can also interact with PCAF. PCAF-mediated acetylation of Lys-28 enhances Tat's binding to CCNT1. Lys-50 is deacetylated by SIRT1.</text>
</comment>
<comment type="PTM">
    <text evidence="1">Polyubiquitination by host MDM2 does not target Tat to degradation, but activates its transactivation function and fosters interaction with CCNT1 and TAR RNA.</text>
</comment>
<comment type="PTM">
    <text evidence="1">Phosphorylated by EIF2AK2 on serine and threonine residues adjacent to the basic region important for TAR RNA binding and function. Phosphorylation of Tat by EIF2AK2 is dependent on the prior activation of EIF2AK2 by dsRNA.</text>
</comment>
<comment type="miscellaneous">
    <text evidence="1">HIV-1 lineages are divided in three main groups, M (for Major), O (for Outlier), and N (for New, or Non-M, Non-O). The vast majority of strains found worldwide belong to the group M. Group O seems to be endemic to and largely confined to Cameroon and neighboring countries in West Central Africa, where these viruses represent a small minority of HIV-1 strains. The group N is represented by a limited number of isolates from Cameroonian persons. The group M is further subdivided in 9 clades or subtypes (A to D, F to H, J and K).</text>
</comment>
<comment type="miscellaneous">
    <molecule>Isoform Short</molecule>
    <text evidence="3">Expressed in the late stage of the infection cycle, when unspliced viral RNAs are exported to the cytoplasm by the viral Rev protein.</text>
</comment>
<comment type="similarity">
    <text evidence="1">Belongs to the lentiviruses Tat family.</text>
</comment>